<protein>
    <recommendedName>
        <fullName evidence="1">Argininosuccinate lyase</fullName>
        <shortName evidence="1">ASAL</shortName>
        <ecNumber evidence="1">4.3.2.1</ecNumber>
    </recommendedName>
    <alternativeName>
        <fullName evidence="1">Arginosuccinase</fullName>
    </alternativeName>
</protein>
<organism>
    <name type="scientific">Neisseria gonorrhoeae (strain ATCC 700825 / FA 1090)</name>
    <dbReference type="NCBI Taxonomy" id="242231"/>
    <lineage>
        <taxon>Bacteria</taxon>
        <taxon>Pseudomonadati</taxon>
        <taxon>Pseudomonadota</taxon>
        <taxon>Betaproteobacteria</taxon>
        <taxon>Neisseriales</taxon>
        <taxon>Neisseriaceae</taxon>
        <taxon>Neisseria</taxon>
    </lineage>
</organism>
<comment type="catalytic activity">
    <reaction evidence="1">
        <text>2-(N(omega)-L-arginino)succinate = fumarate + L-arginine</text>
        <dbReference type="Rhea" id="RHEA:24020"/>
        <dbReference type="ChEBI" id="CHEBI:29806"/>
        <dbReference type="ChEBI" id="CHEBI:32682"/>
        <dbReference type="ChEBI" id="CHEBI:57472"/>
        <dbReference type="EC" id="4.3.2.1"/>
    </reaction>
</comment>
<comment type="pathway">
    <text evidence="1">Amino-acid biosynthesis; L-arginine biosynthesis; L-arginine from L-ornithine and carbamoyl phosphate: step 3/3.</text>
</comment>
<comment type="subcellular location">
    <subcellularLocation>
        <location evidence="1">Cytoplasm</location>
    </subcellularLocation>
</comment>
<comment type="similarity">
    <text evidence="1">Belongs to the lyase 1 family. Argininosuccinate lyase subfamily.</text>
</comment>
<evidence type="ECO:0000255" key="1">
    <source>
        <dbReference type="HAMAP-Rule" id="MF_00006"/>
    </source>
</evidence>
<reference key="1">
    <citation type="submission" date="2003-03" db="EMBL/GenBank/DDBJ databases">
        <title>The complete genome sequence of Neisseria gonorrhoeae.</title>
        <authorList>
            <person name="Lewis L.A."/>
            <person name="Gillaspy A.F."/>
            <person name="McLaughlin R.E."/>
            <person name="Gipson M."/>
            <person name="Ducey T.F."/>
            <person name="Ownbey T."/>
            <person name="Hartman K."/>
            <person name="Nydick C."/>
            <person name="Carson M.B."/>
            <person name="Vaughn J."/>
            <person name="Thomson C."/>
            <person name="Song L."/>
            <person name="Lin S."/>
            <person name="Yuan X."/>
            <person name="Najar F."/>
            <person name="Zhan M."/>
            <person name="Ren Q."/>
            <person name="Zhu H."/>
            <person name="Qi S."/>
            <person name="Kenton S.M."/>
            <person name="Lai H."/>
            <person name="White J.D."/>
            <person name="Clifton S."/>
            <person name="Roe B.A."/>
            <person name="Dyer D.W."/>
        </authorList>
    </citation>
    <scope>NUCLEOTIDE SEQUENCE [LARGE SCALE GENOMIC DNA]</scope>
    <source>
        <strain>ATCC 700825 / FA 1090</strain>
    </source>
</reference>
<dbReference type="EC" id="4.3.2.1" evidence="1"/>
<dbReference type="EMBL" id="AE004969">
    <property type="protein sequence ID" value="AAW88972.1"/>
    <property type="molecule type" value="Genomic_DNA"/>
</dbReference>
<dbReference type="RefSeq" id="WP_003704829.1">
    <property type="nucleotide sequence ID" value="NC_002946.2"/>
</dbReference>
<dbReference type="RefSeq" id="YP_207384.1">
    <property type="nucleotide sequence ID" value="NC_002946.2"/>
</dbReference>
<dbReference type="SMR" id="Q5FA15"/>
<dbReference type="STRING" id="242231.NGO_0219"/>
<dbReference type="KEGG" id="ngo:NGO_0219"/>
<dbReference type="PATRIC" id="fig|242231.10.peg.271"/>
<dbReference type="HOGENOM" id="CLU_027272_2_3_4"/>
<dbReference type="UniPathway" id="UPA00068">
    <property type="reaction ID" value="UER00114"/>
</dbReference>
<dbReference type="Proteomes" id="UP000000535">
    <property type="component" value="Chromosome"/>
</dbReference>
<dbReference type="GO" id="GO:0005829">
    <property type="term" value="C:cytosol"/>
    <property type="evidence" value="ECO:0007669"/>
    <property type="project" value="TreeGrafter"/>
</dbReference>
<dbReference type="GO" id="GO:0004056">
    <property type="term" value="F:argininosuccinate lyase activity"/>
    <property type="evidence" value="ECO:0007669"/>
    <property type="project" value="UniProtKB-UniRule"/>
</dbReference>
<dbReference type="GO" id="GO:0042450">
    <property type="term" value="P:arginine biosynthetic process via ornithine"/>
    <property type="evidence" value="ECO:0007669"/>
    <property type="project" value="InterPro"/>
</dbReference>
<dbReference type="GO" id="GO:0006526">
    <property type="term" value="P:L-arginine biosynthetic process"/>
    <property type="evidence" value="ECO:0007669"/>
    <property type="project" value="UniProtKB-UniRule"/>
</dbReference>
<dbReference type="CDD" id="cd01359">
    <property type="entry name" value="Argininosuccinate_lyase"/>
    <property type="match status" value="1"/>
</dbReference>
<dbReference type="FunFam" id="1.10.275.10:FF:000002">
    <property type="entry name" value="Argininosuccinate lyase"/>
    <property type="match status" value="1"/>
</dbReference>
<dbReference type="FunFam" id="1.10.40.30:FF:000001">
    <property type="entry name" value="Argininosuccinate lyase"/>
    <property type="match status" value="1"/>
</dbReference>
<dbReference type="FunFam" id="1.20.200.10:FF:000015">
    <property type="entry name" value="argininosuccinate lyase isoform X2"/>
    <property type="match status" value="1"/>
</dbReference>
<dbReference type="Gene3D" id="1.10.40.30">
    <property type="entry name" value="Fumarase/aspartase (C-terminal domain)"/>
    <property type="match status" value="1"/>
</dbReference>
<dbReference type="Gene3D" id="1.20.200.10">
    <property type="entry name" value="Fumarase/aspartase (Central domain)"/>
    <property type="match status" value="1"/>
</dbReference>
<dbReference type="Gene3D" id="1.10.275.10">
    <property type="entry name" value="Fumarase/aspartase (N-terminal domain)"/>
    <property type="match status" value="1"/>
</dbReference>
<dbReference type="HAMAP" id="MF_00006">
    <property type="entry name" value="Arg_succ_lyase"/>
    <property type="match status" value="1"/>
</dbReference>
<dbReference type="InterPro" id="IPR029419">
    <property type="entry name" value="Arg_succ_lyase_C"/>
</dbReference>
<dbReference type="InterPro" id="IPR009049">
    <property type="entry name" value="Argininosuccinate_lyase"/>
</dbReference>
<dbReference type="InterPro" id="IPR024083">
    <property type="entry name" value="Fumarase/histidase_N"/>
</dbReference>
<dbReference type="InterPro" id="IPR020557">
    <property type="entry name" value="Fumarate_lyase_CS"/>
</dbReference>
<dbReference type="InterPro" id="IPR000362">
    <property type="entry name" value="Fumarate_lyase_fam"/>
</dbReference>
<dbReference type="InterPro" id="IPR022761">
    <property type="entry name" value="Fumarate_lyase_N"/>
</dbReference>
<dbReference type="InterPro" id="IPR008948">
    <property type="entry name" value="L-Aspartase-like"/>
</dbReference>
<dbReference type="NCBIfam" id="TIGR00838">
    <property type="entry name" value="argH"/>
    <property type="match status" value="1"/>
</dbReference>
<dbReference type="PANTHER" id="PTHR43814">
    <property type="entry name" value="ARGININOSUCCINATE LYASE"/>
    <property type="match status" value="1"/>
</dbReference>
<dbReference type="PANTHER" id="PTHR43814:SF1">
    <property type="entry name" value="ARGININOSUCCINATE LYASE"/>
    <property type="match status" value="1"/>
</dbReference>
<dbReference type="Pfam" id="PF14698">
    <property type="entry name" value="ASL_C2"/>
    <property type="match status" value="1"/>
</dbReference>
<dbReference type="Pfam" id="PF00206">
    <property type="entry name" value="Lyase_1"/>
    <property type="match status" value="1"/>
</dbReference>
<dbReference type="PRINTS" id="PR00145">
    <property type="entry name" value="ARGSUCLYASE"/>
</dbReference>
<dbReference type="PRINTS" id="PR00149">
    <property type="entry name" value="FUMRATELYASE"/>
</dbReference>
<dbReference type="SUPFAM" id="SSF48557">
    <property type="entry name" value="L-aspartase-like"/>
    <property type="match status" value="1"/>
</dbReference>
<dbReference type="PROSITE" id="PS00163">
    <property type="entry name" value="FUMARATE_LYASES"/>
    <property type="match status" value="1"/>
</dbReference>
<proteinExistence type="inferred from homology"/>
<name>ARLY_NEIG1</name>
<sequence length="458" mass="51310">MHDKTWSGRFNEPVSELVKQYTASIGFDQRLAEWDIQGSLAHAQMLTRSGVLSENDLTDIRRGMSEILEEIRSGKIEWPLDLEDVHMNIERRLTDKIGDAGKRLHTGRSRNDQVATDIRLWLRDQITVIQNLIQNLQTALLDLAEQNAEAVMPGFTHLQVAQPVSFGHHMLAYVEMLGRDFERMTDCRKRVNRMPLGAAALAGTTYPIQREITAELLGFEQICQNSLDAVSDRDFAIEFTAAASLVMVHLSRLSEELILWMSPRFGFIDIADRFCTGSSIMPQKKNPDVPELVRGKSGRVIGHLIGLITLMKSQPLAYNKDNQEDKEPLFDTADTLIDTLRIYADMMRGVTVKPGNMRAAVMQGFATATDLADYLVKKGMPFRDAHEVVAQAVRHADEAGVDLSELPLEALQGFSKLISDDVYGVLTPEGSLNARNHLGGTAPEQVRLQVKRWREMSA</sequence>
<gene>
    <name evidence="1" type="primary">argH</name>
    <name type="ordered locus">NGO_0219</name>
</gene>
<accession>Q5FA15</accession>
<keyword id="KW-0028">Amino-acid biosynthesis</keyword>
<keyword id="KW-0055">Arginine biosynthesis</keyword>
<keyword id="KW-0963">Cytoplasm</keyword>
<keyword id="KW-0456">Lyase</keyword>
<keyword id="KW-1185">Reference proteome</keyword>
<feature type="chain" id="PRO_0000240741" description="Argininosuccinate lyase">
    <location>
        <begin position="1"/>
        <end position="458"/>
    </location>
</feature>